<keyword id="KW-0963">Cytoplasm</keyword>
<keyword id="KW-0274">FAD</keyword>
<keyword id="KW-0285">Flavoprotein</keyword>
<keyword id="KW-0560">Oxidoreductase</keyword>
<keyword id="KW-1185">Reference proteome</keyword>
<reference key="1">
    <citation type="journal article" date="2002" name="Nature">
        <title>The genome sequence and structure of rice chromosome 1.</title>
        <authorList>
            <person name="Sasaki T."/>
            <person name="Matsumoto T."/>
            <person name="Yamamoto K."/>
            <person name="Sakata K."/>
            <person name="Baba T."/>
            <person name="Katayose Y."/>
            <person name="Wu J."/>
            <person name="Niimura Y."/>
            <person name="Cheng Z."/>
            <person name="Nagamura Y."/>
            <person name="Antonio B.A."/>
            <person name="Kanamori H."/>
            <person name="Hosokawa S."/>
            <person name="Masukawa M."/>
            <person name="Arikawa K."/>
            <person name="Chiden Y."/>
            <person name="Hayashi M."/>
            <person name="Okamoto M."/>
            <person name="Ando T."/>
            <person name="Aoki H."/>
            <person name="Arita K."/>
            <person name="Hamada M."/>
            <person name="Harada C."/>
            <person name="Hijishita S."/>
            <person name="Honda M."/>
            <person name="Ichikawa Y."/>
            <person name="Idonuma A."/>
            <person name="Iijima M."/>
            <person name="Ikeda M."/>
            <person name="Ikeno M."/>
            <person name="Ito S."/>
            <person name="Ito T."/>
            <person name="Ito Y."/>
            <person name="Ito Y."/>
            <person name="Iwabuchi A."/>
            <person name="Kamiya K."/>
            <person name="Karasawa W."/>
            <person name="Katagiri S."/>
            <person name="Kikuta A."/>
            <person name="Kobayashi N."/>
            <person name="Kono I."/>
            <person name="Machita K."/>
            <person name="Maehara T."/>
            <person name="Mizuno H."/>
            <person name="Mizubayashi T."/>
            <person name="Mukai Y."/>
            <person name="Nagasaki H."/>
            <person name="Nakashima M."/>
            <person name="Nakama Y."/>
            <person name="Nakamichi Y."/>
            <person name="Nakamura M."/>
            <person name="Namiki N."/>
            <person name="Negishi M."/>
            <person name="Ohta I."/>
            <person name="Ono N."/>
            <person name="Saji S."/>
            <person name="Sakai K."/>
            <person name="Shibata M."/>
            <person name="Shimokawa T."/>
            <person name="Shomura A."/>
            <person name="Song J."/>
            <person name="Takazaki Y."/>
            <person name="Terasawa K."/>
            <person name="Tsuji K."/>
            <person name="Waki K."/>
            <person name="Yamagata H."/>
            <person name="Yamane H."/>
            <person name="Yoshiki S."/>
            <person name="Yoshihara R."/>
            <person name="Yukawa K."/>
            <person name="Zhong H."/>
            <person name="Iwama H."/>
            <person name="Endo T."/>
            <person name="Ito H."/>
            <person name="Hahn J.H."/>
            <person name="Kim H.-I."/>
            <person name="Eun M.-Y."/>
            <person name="Yano M."/>
            <person name="Jiang J."/>
            <person name="Gojobori T."/>
        </authorList>
    </citation>
    <scope>NUCLEOTIDE SEQUENCE [LARGE SCALE GENOMIC DNA]</scope>
    <source>
        <strain>cv. Nipponbare</strain>
    </source>
</reference>
<reference key="2">
    <citation type="journal article" date="2005" name="Nature">
        <title>The map-based sequence of the rice genome.</title>
        <authorList>
            <consortium name="International rice genome sequencing project (IRGSP)"/>
        </authorList>
    </citation>
    <scope>NUCLEOTIDE SEQUENCE [LARGE SCALE GENOMIC DNA]</scope>
    <source>
        <strain>cv. Nipponbare</strain>
    </source>
</reference>
<reference key="3">
    <citation type="journal article" date="2008" name="Nucleic Acids Res.">
        <title>The rice annotation project database (RAP-DB): 2008 update.</title>
        <authorList>
            <consortium name="The rice annotation project (RAP)"/>
        </authorList>
    </citation>
    <scope>GENOME REANNOTATION</scope>
    <source>
        <strain>cv. Nipponbare</strain>
    </source>
</reference>
<reference key="4">
    <citation type="journal article" date="2013" name="Rice">
        <title>Improvement of the Oryza sativa Nipponbare reference genome using next generation sequence and optical map data.</title>
        <authorList>
            <person name="Kawahara Y."/>
            <person name="de la Bastide M."/>
            <person name="Hamilton J.P."/>
            <person name="Kanamori H."/>
            <person name="McCombie W.R."/>
            <person name="Ouyang S."/>
            <person name="Schwartz D.C."/>
            <person name="Tanaka T."/>
            <person name="Wu J."/>
            <person name="Zhou S."/>
            <person name="Childs K.L."/>
            <person name="Davidson R.M."/>
            <person name="Lin H."/>
            <person name="Quesada-Ocampo L."/>
            <person name="Vaillancourt B."/>
            <person name="Sakai H."/>
            <person name="Lee S.S."/>
            <person name="Kim J."/>
            <person name="Numa H."/>
            <person name="Itoh T."/>
            <person name="Buell C.R."/>
            <person name="Matsumoto T."/>
        </authorList>
    </citation>
    <scope>GENOME REANNOTATION</scope>
    <source>
        <strain>cv. Nipponbare</strain>
    </source>
</reference>
<reference key="5">
    <citation type="journal article" date="2005" name="PLoS Biol.">
        <title>The genomes of Oryza sativa: a history of duplications.</title>
        <authorList>
            <person name="Yu J."/>
            <person name="Wang J."/>
            <person name="Lin W."/>
            <person name="Li S."/>
            <person name="Li H."/>
            <person name="Zhou J."/>
            <person name="Ni P."/>
            <person name="Dong W."/>
            <person name="Hu S."/>
            <person name="Zeng C."/>
            <person name="Zhang J."/>
            <person name="Zhang Y."/>
            <person name="Li R."/>
            <person name="Xu Z."/>
            <person name="Li S."/>
            <person name="Li X."/>
            <person name="Zheng H."/>
            <person name="Cong L."/>
            <person name="Lin L."/>
            <person name="Yin J."/>
            <person name="Geng J."/>
            <person name="Li G."/>
            <person name="Shi J."/>
            <person name="Liu J."/>
            <person name="Lv H."/>
            <person name="Li J."/>
            <person name="Wang J."/>
            <person name="Deng Y."/>
            <person name="Ran L."/>
            <person name="Shi X."/>
            <person name="Wang X."/>
            <person name="Wu Q."/>
            <person name="Li C."/>
            <person name="Ren X."/>
            <person name="Wang J."/>
            <person name="Wang X."/>
            <person name="Li D."/>
            <person name="Liu D."/>
            <person name="Zhang X."/>
            <person name="Ji Z."/>
            <person name="Zhao W."/>
            <person name="Sun Y."/>
            <person name="Zhang Z."/>
            <person name="Bao J."/>
            <person name="Han Y."/>
            <person name="Dong L."/>
            <person name="Ji J."/>
            <person name="Chen P."/>
            <person name="Wu S."/>
            <person name="Liu J."/>
            <person name="Xiao Y."/>
            <person name="Bu D."/>
            <person name="Tan J."/>
            <person name="Yang L."/>
            <person name="Ye C."/>
            <person name="Zhang J."/>
            <person name="Xu J."/>
            <person name="Zhou Y."/>
            <person name="Yu Y."/>
            <person name="Zhang B."/>
            <person name="Zhuang S."/>
            <person name="Wei H."/>
            <person name="Liu B."/>
            <person name="Lei M."/>
            <person name="Yu H."/>
            <person name="Li Y."/>
            <person name="Xu H."/>
            <person name="Wei S."/>
            <person name="He X."/>
            <person name="Fang L."/>
            <person name="Zhang Z."/>
            <person name="Zhang Y."/>
            <person name="Huang X."/>
            <person name="Su Z."/>
            <person name="Tong W."/>
            <person name="Li J."/>
            <person name="Tong Z."/>
            <person name="Li S."/>
            <person name="Ye J."/>
            <person name="Wang L."/>
            <person name="Fang L."/>
            <person name="Lei T."/>
            <person name="Chen C.-S."/>
            <person name="Chen H.-C."/>
            <person name="Xu Z."/>
            <person name="Li H."/>
            <person name="Huang H."/>
            <person name="Zhang F."/>
            <person name="Xu H."/>
            <person name="Li N."/>
            <person name="Zhao C."/>
            <person name="Li S."/>
            <person name="Dong L."/>
            <person name="Huang Y."/>
            <person name="Li L."/>
            <person name="Xi Y."/>
            <person name="Qi Q."/>
            <person name="Li W."/>
            <person name="Zhang B."/>
            <person name="Hu W."/>
            <person name="Zhang Y."/>
            <person name="Tian X."/>
            <person name="Jiao Y."/>
            <person name="Liang X."/>
            <person name="Jin J."/>
            <person name="Gao L."/>
            <person name="Zheng W."/>
            <person name="Hao B."/>
            <person name="Liu S.-M."/>
            <person name="Wang W."/>
            <person name="Yuan L."/>
            <person name="Cao M."/>
            <person name="McDermott J."/>
            <person name="Samudrala R."/>
            <person name="Wang J."/>
            <person name="Wong G.K.-S."/>
            <person name="Yang H."/>
        </authorList>
    </citation>
    <scope>NUCLEOTIDE SEQUENCE [LARGE SCALE GENOMIC DNA]</scope>
    <source>
        <strain>cv. Nipponbare</strain>
    </source>
</reference>
<reference key="6">
    <citation type="journal article" date="2014" name="Plant Cell Rep.">
        <title>Oryza sativa polyamine oxidase 1 back-converts tetraamines, spermine and thermospermine, to spermidine.</title>
        <authorList>
            <person name="Liu T."/>
            <person name="Kim D.W."/>
            <person name="Niitsu M."/>
            <person name="Berberich T."/>
            <person name="Kusano T."/>
        </authorList>
    </citation>
    <scope>FUNCTION</scope>
    <scope>CATALYTIC ACTIVITY</scope>
    <scope>COFACTOR</scope>
    <scope>BIOPHYSICOCHEMICAL PROPERTIES</scope>
    <scope>SUBCELLULAR LOCATION</scope>
    <scope>INDUCTION</scope>
</reference>
<organism>
    <name type="scientific">Oryza sativa subsp. japonica</name>
    <name type="common">Rice</name>
    <dbReference type="NCBI Taxonomy" id="39947"/>
    <lineage>
        <taxon>Eukaryota</taxon>
        <taxon>Viridiplantae</taxon>
        <taxon>Streptophyta</taxon>
        <taxon>Embryophyta</taxon>
        <taxon>Tracheophyta</taxon>
        <taxon>Spermatophyta</taxon>
        <taxon>Magnoliopsida</taxon>
        <taxon>Liliopsida</taxon>
        <taxon>Poales</taxon>
        <taxon>Poaceae</taxon>
        <taxon>BOP clade</taxon>
        <taxon>Oryzoideae</taxon>
        <taxon>Oryzeae</taxon>
        <taxon>Oryzinae</taxon>
        <taxon>Oryza</taxon>
        <taxon>Oryza sativa</taxon>
    </lineage>
</organism>
<protein>
    <recommendedName>
        <fullName evidence="4">Polyamine oxidase 1</fullName>
        <shortName evidence="4">OsPAO1</shortName>
        <ecNumber evidence="3">1.5.3.-</ecNumber>
    </recommendedName>
    <alternativeName>
        <fullName evidence="5">OsAO4</fullName>
    </alternativeName>
</protein>
<evidence type="ECO:0000250" key="1">
    <source>
        <dbReference type="UniProtKB" id="O64411"/>
    </source>
</evidence>
<evidence type="ECO:0000256" key="2">
    <source>
        <dbReference type="SAM" id="MobiDB-lite"/>
    </source>
</evidence>
<evidence type="ECO:0000269" key="3">
    <source>
    </source>
</evidence>
<evidence type="ECO:0000303" key="4">
    <source>
    </source>
</evidence>
<evidence type="ECO:0000305" key="5"/>
<evidence type="ECO:0000305" key="6">
    <source>
    </source>
</evidence>
<evidence type="ECO:0000312" key="7">
    <source>
        <dbReference type="EMBL" id="BAD81522.1"/>
    </source>
</evidence>
<evidence type="ECO:0000312" key="8">
    <source>
        <dbReference type="EMBL" id="BAF05952.1"/>
    </source>
</evidence>
<evidence type="ECO:0000312" key="9">
    <source>
        <dbReference type="EMBL" id="EAZ13287.1"/>
    </source>
</evidence>
<feature type="chain" id="PRO_0000445721" description="Polyamine oxidase 1">
    <location>
        <begin position="1"/>
        <end position="512"/>
    </location>
</feature>
<feature type="region of interest" description="Disordered" evidence="2">
    <location>
        <begin position="448"/>
        <end position="470"/>
    </location>
</feature>
<feature type="binding site" evidence="1">
    <location>
        <position position="38"/>
    </location>
    <ligand>
        <name>FAD</name>
        <dbReference type="ChEBI" id="CHEBI:57692"/>
    </ligand>
</feature>
<feature type="binding site" evidence="1">
    <location>
        <position position="46"/>
    </location>
    <ligand>
        <name>FAD</name>
        <dbReference type="ChEBI" id="CHEBI:57692"/>
    </ligand>
</feature>
<feature type="binding site" evidence="1">
    <location>
        <position position="476"/>
    </location>
    <ligand>
        <name>FAD</name>
        <dbReference type="ChEBI" id="CHEBI:57692"/>
    </ligand>
</feature>
<dbReference type="EC" id="1.5.3.-" evidence="3"/>
<dbReference type="EMBL" id="AP002901">
    <property type="protein sequence ID" value="BAD81522.1"/>
    <property type="molecule type" value="Genomic_DNA"/>
</dbReference>
<dbReference type="EMBL" id="AP008207">
    <property type="protein sequence ID" value="BAF05952.1"/>
    <property type="molecule type" value="Genomic_DNA"/>
</dbReference>
<dbReference type="EMBL" id="AP014957">
    <property type="protein sequence ID" value="BAS73974.1"/>
    <property type="molecule type" value="Genomic_DNA"/>
</dbReference>
<dbReference type="EMBL" id="CM000138">
    <property type="protein sequence ID" value="EAZ13287.1"/>
    <property type="molecule type" value="Genomic_DNA"/>
</dbReference>
<dbReference type="SMR" id="Q5NAI7"/>
<dbReference type="FunCoup" id="Q5NAI7">
    <property type="interactions" value="962"/>
</dbReference>
<dbReference type="STRING" id="39947.Q5NAI7"/>
<dbReference type="PaxDb" id="39947-Q5NAI7"/>
<dbReference type="EnsemblPlants" id="Os01t0710200-01">
    <property type="protein sequence ID" value="Os01t0710200-01"/>
    <property type="gene ID" value="Os01g0710200"/>
</dbReference>
<dbReference type="Gramene" id="Os01t0710200-01">
    <property type="protein sequence ID" value="Os01t0710200-01"/>
    <property type="gene ID" value="Os01g0710200"/>
</dbReference>
<dbReference type="KEGG" id="dosa:Os01g0710200"/>
<dbReference type="KEGG" id="osa:4327828"/>
<dbReference type="eggNOG" id="KOG0685">
    <property type="taxonomic scope" value="Eukaryota"/>
</dbReference>
<dbReference type="HOGENOM" id="CLU_004498_2_3_1"/>
<dbReference type="InParanoid" id="Q5NAI7"/>
<dbReference type="OMA" id="CITGCHS"/>
<dbReference type="OrthoDB" id="2019015at2759"/>
<dbReference type="PlantReactome" id="R-OSA-1119567">
    <property type="pathway name" value="Beta-alanine biosynthesis I"/>
</dbReference>
<dbReference type="UniPathway" id="UPA00211"/>
<dbReference type="Proteomes" id="UP000000763">
    <property type="component" value="Chromosome 1"/>
</dbReference>
<dbReference type="Proteomes" id="UP000007752">
    <property type="component" value="Chromosome 1"/>
</dbReference>
<dbReference type="Proteomes" id="UP000059680">
    <property type="component" value="Chromosome 1"/>
</dbReference>
<dbReference type="GO" id="GO:0005737">
    <property type="term" value="C:cytoplasm"/>
    <property type="evidence" value="ECO:0000314"/>
    <property type="project" value="UniProtKB"/>
</dbReference>
<dbReference type="GO" id="GO:0050660">
    <property type="term" value="F:flavin adenine dinucleotide binding"/>
    <property type="evidence" value="ECO:0000314"/>
    <property type="project" value="UniProtKB"/>
</dbReference>
<dbReference type="GO" id="GO:0052903">
    <property type="term" value="F:N(1)-acetylpolyamine oxidase (3-acetamidopropanal-forming) activity"/>
    <property type="evidence" value="ECO:0000314"/>
    <property type="project" value="UniProtKB"/>
</dbReference>
<dbReference type="GO" id="GO:0046592">
    <property type="term" value="F:polyamine oxidase activity"/>
    <property type="evidence" value="ECO:0000318"/>
    <property type="project" value="GO_Central"/>
</dbReference>
<dbReference type="GO" id="GO:0052901">
    <property type="term" value="F:spermine oxidase activity"/>
    <property type="evidence" value="ECO:0000314"/>
    <property type="project" value="UniProtKB"/>
</dbReference>
<dbReference type="GO" id="GO:1990534">
    <property type="term" value="F:thermospermine oxidase activity"/>
    <property type="evidence" value="ECO:0007669"/>
    <property type="project" value="EnsemblPlants"/>
</dbReference>
<dbReference type="GO" id="GO:0048510">
    <property type="term" value="P:regulation of timing of transition from vegetative to reproductive phase"/>
    <property type="evidence" value="ECO:0007669"/>
    <property type="project" value="EnsemblPlants"/>
</dbReference>
<dbReference type="GO" id="GO:0046208">
    <property type="term" value="P:spermine catabolic process"/>
    <property type="evidence" value="ECO:0000314"/>
    <property type="project" value="UniProtKB"/>
</dbReference>
<dbReference type="GO" id="GO:1903602">
    <property type="term" value="P:thermospermine catabolic process"/>
    <property type="evidence" value="ECO:0000314"/>
    <property type="project" value="UniProtKB"/>
</dbReference>
<dbReference type="Gene3D" id="3.90.660.10">
    <property type="match status" value="1"/>
</dbReference>
<dbReference type="Gene3D" id="3.50.50.60">
    <property type="entry name" value="FAD/NAD(P)-binding domain"/>
    <property type="match status" value="1"/>
</dbReference>
<dbReference type="InterPro" id="IPR002937">
    <property type="entry name" value="Amino_oxidase"/>
</dbReference>
<dbReference type="InterPro" id="IPR036188">
    <property type="entry name" value="FAD/NAD-bd_sf"/>
</dbReference>
<dbReference type="InterPro" id="IPR050281">
    <property type="entry name" value="Flavin_monoamine_oxidase"/>
</dbReference>
<dbReference type="PANTHER" id="PTHR10742">
    <property type="entry name" value="FLAVIN MONOAMINE OXIDASE"/>
    <property type="match status" value="1"/>
</dbReference>
<dbReference type="PANTHER" id="PTHR10742:SF405">
    <property type="entry name" value="PEROXISOMAL N(1)-ACETYL-SPERMINE_SPERMIDINE OXIDASE"/>
    <property type="match status" value="1"/>
</dbReference>
<dbReference type="Pfam" id="PF01593">
    <property type="entry name" value="Amino_oxidase"/>
    <property type="match status" value="1"/>
</dbReference>
<dbReference type="SUPFAM" id="SSF54373">
    <property type="entry name" value="FAD-linked reductases, C-terminal domain"/>
    <property type="match status" value="1"/>
</dbReference>
<dbReference type="SUPFAM" id="SSF51905">
    <property type="entry name" value="FAD/NAD(P)-binding domain"/>
    <property type="match status" value="1"/>
</dbReference>
<sequence length="512" mass="54112">MVAKKPRVVVVGAGISGLAAAHRLCGAGGDRFEVAVVEAGDRVGGRILTSEFAGHRVEMGATWVQGVVGSPVYALARDAGALGEEEGRGLPYERMDGFPDRVLTVAEGGEVVDADTVAGPIEELYRGMMEAARAGEAGGGGGVEEYLRRGLRAYQAARSAGGGGGGGKELEEVDEALLAMHINRERTDTSADDLGDLDLTAEGEYRDFPGEHVTIPGGYSRVVERLAAALPPGTVRLGLRLRRLKWGGTPVRLHFADGAPPLTADHVILTVSLGVLKASLGNKDTAGVGAAAIAFDPPLPPFKREAVARLGFGVVNKLFMEVEAVAPSEPEDVAGVQPAAAGFPFLHMAFRGHVSKIPWWMRGTESICPVHAGSTVALAWFAGREAAHLESLPDDDVIRGAHATLDSFLPAAPRWRVRRIKRSGWATDPLFLGSYSYVAVGSSGDDLDRMAEPLPRGPDAAADERPPSPRLLFAGEATHRTHYSTTHAAYLSGVREANRLLQHYRGGANHTT</sequence>
<accession>Q5NAI7</accession>
<comment type="function">
    <text evidence="3 6">Flavoenzyme involved in polyamine back-conversion (PubMed:24105034). Catalyzes the oxidation of the secondary amino group of polyamines, such as spermine and its acetyl derivatives (PubMed:24105034). Substrate preference is thermospermine &gt; spermine &gt; norspermine &gt; N(1)-acetylspermine (PubMed:24105034). No activity detected when putrescine or spermidine are used as substrates (PubMed:24105034). Plays an important role in the regulation of polyamine intracellular concentration (Probable).</text>
</comment>
<comment type="catalytic activity">
    <reaction evidence="3">
        <text>spermine + O2 + H2O = 3-aminopropanal + spermidine + H2O2</text>
        <dbReference type="Rhea" id="RHEA:25804"/>
        <dbReference type="ChEBI" id="CHEBI:15377"/>
        <dbReference type="ChEBI" id="CHEBI:15379"/>
        <dbReference type="ChEBI" id="CHEBI:16240"/>
        <dbReference type="ChEBI" id="CHEBI:45725"/>
        <dbReference type="ChEBI" id="CHEBI:57834"/>
        <dbReference type="ChEBI" id="CHEBI:58374"/>
    </reaction>
</comment>
<comment type="catalytic activity">
    <reaction evidence="3">
        <text>N(1)-acetylspermine + O2 + H2O = 3-acetamidopropanal + spermidine + H2O2</text>
        <dbReference type="Rhea" id="RHEA:25800"/>
        <dbReference type="ChEBI" id="CHEBI:15377"/>
        <dbReference type="ChEBI" id="CHEBI:15379"/>
        <dbReference type="ChEBI" id="CHEBI:16240"/>
        <dbReference type="ChEBI" id="CHEBI:30322"/>
        <dbReference type="ChEBI" id="CHEBI:57834"/>
        <dbReference type="ChEBI" id="CHEBI:58101"/>
    </reaction>
</comment>
<comment type="catalytic activity">
    <reaction evidence="3">
        <text>norspermine + O2 + H2O = norspermidine + 3-aminopropanal + H2O2</text>
        <dbReference type="Rhea" id="RHEA:25816"/>
        <dbReference type="ChEBI" id="CHEBI:15377"/>
        <dbReference type="ChEBI" id="CHEBI:15379"/>
        <dbReference type="ChEBI" id="CHEBI:16240"/>
        <dbReference type="ChEBI" id="CHEBI:57920"/>
        <dbReference type="ChEBI" id="CHEBI:58374"/>
        <dbReference type="ChEBI" id="CHEBI:58704"/>
    </reaction>
</comment>
<comment type="catalytic activity">
    <reaction evidence="3">
        <text>thermospermine + O2 + H2O = 3-aminopropanal + spermidine + H2O2</text>
        <dbReference type="Rhea" id="RHEA:57836"/>
        <dbReference type="ChEBI" id="CHEBI:15377"/>
        <dbReference type="ChEBI" id="CHEBI:15379"/>
        <dbReference type="ChEBI" id="CHEBI:16240"/>
        <dbReference type="ChEBI" id="CHEBI:57834"/>
        <dbReference type="ChEBI" id="CHEBI:58374"/>
        <dbReference type="ChEBI" id="CHEBI:59903"/>
    </reaction>
</comment>
<comment type="cofactor">
    <cofactor evidence="3">
        <name>FAD</name>
        <dbReference type="ChEBI" id="CHEBI:57692"/>
    </cofactor>
    <text evidence="6">Binds 1 FAD per subunit.</text>
</comment>
<comment type="biophysicochemical properties">
    <kinetics>
        <KM evidence="3">3.69 uM for thermospermine (at pH 6.0 and 30 degrees Celsius)</KM>
        <KM evidence="3">4.93 uM for spermine (at pH 6.0 and 30 degrees Celsius)</KM>
        <KM evidence="3">10.93 uM for norspermine (at pH 6.0 and 30 degrees Celsius)</KM>
    </kinetics>
    <phDependence>
        <text evidence="3">Optimum pH is 6.0 with thermospermine as substrate (PubMed:24105034). Optimum pH is 8.5 with spermine as substrate (PubMed:24105034).</text>
    </phDependence>
    <temperatureDependence>
        <text evidence="3">Optimum temperature is 30 degrees Celsius with thermospermine as substrate (PubMed:24105034). Optimum temperature is 35 degrees Celsius with spermine as substrate (PubMed:24105034).</text>
    </temperatureDependence>
</comment>
<comment type="pathway">
    <text evidence="5">Amine and polyamine degradation; spermine degradation.</text>
</comment>
<comment type="subcellular location">
    <subcellularLocation>
        <location evidence="3">Cytoplasm</location>
    </subcellularLocation>
</comment>
<comment type="induction">
    <text evidence="3">Induced in roots by exogenous treatment with spermine and thermospermine.</text>
</comment>
<comment type="similarity">
    <text evidence="5">Belongs to the flavin monoamine oxidase family.</text>
</comment>
<gene>
    <name evidence="4" type="primary">PAO1</name>
    <name evidence="8" type="ordered locus">Os01g0710200</name>
    <name evidence="5" type="ordered locus">LOC_Os01g51320</name>
    <name evidence="9" type="ORF">OsJ_03212</name>
    <name evidence="7" type="ORF">P0456F08.19</name>
</gene>
<name>PAO1_ORYSJ</name>
<proteinExistence type="evidence at protein level"/>